<sequence>MDSHTLIQALIYLGSAALIVPIAVRLGLGSVLGYLIAGCIIGPWGLRLVTDAESILHFAEIGVVLMLFIIGLELDPQRLWKLRAAVFGGGALQMVICGGLLGLFCMLLGLRWQVAELIGMTLALSSTAIAMQAMNERNLMVTQMGRSAFAVLLFQDIAAIPLVAMIPLLAASSASTTMGAFVLSALKVAGALVLVVLLGRYVTRPALRFVARSGLREVFSAVALFLVFGFGLLLEEVGLSMAMGAFLAGVLLASSEYRHALESDIEPFKGLLLGLFFIGVGMSIDFGTLLENPLRIVILLLGFLIIKIAMLWLIARPLQVPNKQRRWFAVLLGQGSEFAFVVFGAAQMANVLEPEWAKSLTLAVALSMAATPILLVILNRLEQSSTEEAREADEIDEEQPRVIIAGFGRFGQITGRLLLSSGVKMVVLDHDPDHIETLRKFGMKVFYGDATRMDLLESAGAAKAEVLINAIDDPQTNLQLTEMVKEHFPHLQIIARARDVDHYIRLRQAGVEKPERETFEGALKTGRLALESLGLGPYEARERADVFRRFNIQMVEEMAMVENDTKARAAVYKRTSAMLSEIITEDREHLSLIQRHGWQGTEEGKHTGNMADEPETKPSS</sequence>
<feature type="chain" id="PRO_1000184617" description="Glutathione-regulated potassium-efflux system protein KefC">
    <location>
        <begin position="1"/>
        <end position="620"/>
    </location>
</feature>
<feature type="transmembrane region" description="Helical" evidence="1">
    <location>
        <begin position="4"/>
        <end position="24"/>
    </location>
</feature>
<feature type="transmembrane region" description="Helical" evidence="1">
    <location>
        <begin position="26"/>
        <end position="46"/>
    </location>
</feature>
<feature type="transmembrane region" description="Helical" evidence="1">
    <location>
        <begin position="54"/>
        <end position="74"/>
    </location>
</feature>
<feature type="transmembrane region" description="Helical" evidence="1">
    <location>
        <begin position="90"/>
        <end position="110"/>
    </location>
</feature>
<feature type="transmembrane region" description="Helical" evidence="1">
    <location>
        <begin position="114"/>
        <end position="134"/>
    </location>
</feature>
<feature type="transmembrane region" description="Helical" evidence="1">
    <location>
        <begin position="149"/>
        <end position="169"/>
    </location>
</feature>
<feature type="transmembrane region" description="Helical" evidence="1">
    <location>
        <begin position="178"/>
        <end position="198"/>
    </location>
</feature>
<feature type="transmembrane region" description="Helical" evidence="1">
    <location>
        <begin position="218"/>
        <end position="238"/>
    </location>
</feature>
<feature type="transmembrane region" description="Helical" evidence="1">
    <location>
        <begin position="270"/>
        <end position="290"/>
    </location>
</feature>
<feature type="transmembrane region" description="Helical" evidence="1">
    <location>
        <begin position="294"/>
        <end position="314"/>
    </location>
</feature>
<feature type="transmembrane region" description="Helical" evidence="1">
    <location>
        <begin position="327"/>
        <end position="347"/>
    </location>
</feature>
<feature type="transmembrane region" description="Helical" evidence="1">
    <location>
        <begin position="359"/>
        <end position="379"/>
    </location>
</feature>
<feature type="domain" description="RCK N-terminal" evidence="2">
    <location>
        <begin position="399"/>
        <end position="518"/>
    </location>
</feature>
<feature type="region of interest" description="Disordered" evidence="3">
    <location>
        <begin position="597"/>
        <end position="620"/>
    </location>
</feature>
<accession>B7MNQ4</accession>
<proteinExistence type="inferred from homology"/>
<gene>
    <name evidence="1" type="primary">kefC</name>
    <name type="ordered locus">ECED1_0046</name>
</gene>
<evidence type="ECO:0000255" key="1">
    <source>
        <dbReference type="HAMAP-Rule" id="MF_01413"/>
    </source>
</evidence>
<evidence type="ECO:0000255" key="2">
    <source>
        <dbReference type="PROSITE-ProRule" id="PRU00543"/>
    </source>
</evidence>
<evidence type="ECO:0000256" key="3">
    <source>
        <dbReference type="SAM" id="MobiDB-lite"/>
    </source>
</evidence>
<organism>
    <name type="scientific">Escherichia coli O81 (strain ED1a)</name>
    <dbReference type="NCBI Taxonomy" id="585397"/>
    <lineage>
        <taxon>Bacteria</taxon>
        <taxon>Pseudomonadati</taxon>
        <taxon>Pseudomonadota</taxon>
        <taxon>Gammaproteobacteria</taxon>
        <taxon>Enterobacterales</taxon>
        <taxon>Enterobacteriaceae</taxon>
        <taxon>Escherichia</taxon>
    </lineage>
</organism>
<reference key="1">
    <citation type="journal article" date="2009" name="PLoS Genet.">
        <title>Organised genome dynamics in the Escherichia coli species results in highly diverse adaptive paths.</title>
        <authorList>
            <person name="Touchon M."/>
            <person name="Hoede C."/>
            <person name="Tenaillon O."/>
            <person name="Barbe V."/>
            <person name="Baeriswyl S."/>
            <person name="Bidet P."/>
            <person name="Bingen E."/>
            <person name="Bonacorsi S."/>
            <person name="Bouchier C."/>
            <person name="Bouvet O."/>
            <person name="Calteau A."/>
            <person name="Chiapello H."/>
            <person name="Clermont O."/>
            <person name="Cruveiller S."/>
            <person name="Danchin A."/>
            <person name="Diard M."/>
            <person name="Dossat C."/>
            <person name="Karoui M.E."/>
            <person name="Frapy E."/>
            <person name="Garry L."/>
            <person name="Ghigo J.M."/>
            <person name="Gilles A.M."/>
            <person name="Johnson J."/>
            <person name="Le Bouguenec C."/>
            <person name="Lescat M."/>
            <person name="Mangenot S."/>
            <person name="Martinez-Jehanne V."/>
            <person name="Matic I."/>
            <person name="Nassif X."/>
            <person name="Oztas S."/>
            <person name="Petit M.A."/>
            <person name="Pichon C."/>
            <person name="Rouy Z."/>
            <person name="Ruf C.S."/>
            <person name="Schneider D."/>
            <person name="Tourret J."/>
            <person name="Vacherie B."/>
            <person name="Vallenet D."/>
            <person name="Medigue C."/>
            <person name="Rocha E.P.C."/>
            <person name="Denamur E."/>
        </authorList>
    </citation>
    <scope>NUCLEOTIDE SEQUENCE [LARGE SCALE GENOMIC DNA]</scope>
    <source>
        <strain>ED1a</strain>
    </source>
</reference>
<protein>
    <recommendedName>
        <fullName evidence="1">Glutathione-regulated potassium-efflux system protein KefC</fullName>
    </recommendedName>
    <alternativeName>
        <fullName evidence="1">K(+)/H(+) antiporter</fullName>
    </alternativeName>
</protein>
<dbReference type="EMBL" id="CU928162">
    <property type="protein sequence ID" value="CAR06269.1"/>
    <property type="molecule type" value="Genomic_DNA"/>
</dbReference>
<dbReference type="RefSeq" id="WP_000377124.1">
    <property type="nucleotide sequence ID" value="NC_011745.1"/>
</dbReference>
<dbReference type="SMR" id="B7MNQ4"/>
<dbReference type="KEGG" id="ecq:ECED1_0046"/>
<dbReference type="HOGENOM" id="CLU_005126_9_3_6"/>
<dbReference type="Proteomes" id="UP000000748">
    <property type="component" value="Chromosome"/>
</dbReference>
<dbReference type="GO" id="GO:0005886">
    <property type="term" value="C:plasma membrane"/>
    <property type="evidence" value="ECO:0007669"/>
    <property type="project" value="UniProtKB-SubCell"/>
</dbReference>
<dbReference type="GO" id="GO:0019899">
    <property type="term" value="F:enzyme binding"/>
    <property type="evidence" value="ECO:0007669"/>
    <property type="project" value="InterPro"/>
</dbReference>
<dbReference type="GO" id="GO:0015503">
    <property type="term" value="F:glutathione-regulated potassium exporter activity"/>
    <property type="evidence" value="ECO:0007669"/>
    <property type="project" value="UniProtKB-UniRule"/>
</dbReference>
<dbReference type="GO" id="GO:0015643">
    <property type="term" value="F:toxic substance binding"/>
    <property type="evidence" value="ECO:0007669"/>
    <property type="project" value="InterPro"/>
</dbReference>
<dbReference type="GO" id="GO:1902600">
    <property type="term" value="P:proton transmembrane transport"/>
    <property type="evidence" value="ECO:0007669"/>
    <property type="project" value="InterPro"/>
</dbReference>
<dbReference type="GO" id="GO:0051595">
    <property type="term" value="P:response to methylglyoxal"/>
    <property type="evidence" value="ECO:0007669"/>
    <property type="project" value="InterPro"/>
</dbReference>
<dbReference type="FunFam" id="1.20.1530.20:FF:000001">
    <property type="entry name" value="Glutathione-regulated potassium-efflux system protein KefB"/>
    <property type="match status" value="1"/>
</dbReference>
<dbReference type="FunFam" id="3.40.50.720:FF:000036">
    <property type="entry name" value="Glutathione-regulated potassium-efflux system protein KefB"/>
    <property type="match status" value="1"/>
</dbReference>
<dbReference type="Gene3D" id="1.20.1530.20">
    <property type="match status" value="1"/>
</dbReference>
<dbReference type="Gene3D" id="3.40.50.720">
    <property type="entry name" value="NAD(P)-binding Rossmann-like Domain"/>
    <property type="match status" value="1"/>
</dbReference>
<dbReference type="HAMAP" id="MF_01413">
    <property type="entry name" value="K_H_efflux_KefC"/>
    <property type="match status" value="1"/>
</dbReference>
<dbReference type="InterPro" id="IPR006153">
    <property type="entry name" value="Cation/H_exchanger_TM"/>
</dbReference>
<dbReference type="InterPro" id="IPR004771">
    <property type="entry name" value="K/H_exchanger"/>
</dbReference>
<dbReference type="InterPro" id="IPR023941">
    <property type="entry name" value="K_H_efflux_KefC"/>
</dbReference>
<dbReference type="InterPro" id="IPR006036">
    <property type="entry name" value="K_uptake_TrkA"/>
</dbReference>
<dbReference type="InterPro" id="IPR038770">
    <property type="entry name" value="Na+/solute_symporter_sf"/>
</dbReference>
<dbReference type="InterPro" id="IPR036291">
    <property type="entry name" value="NAD(P)-bd_dom_sf"/>
</dbReference>
<dbReference type="InterPro" id="IPR003148">
    <property type="entry name" value="RCK_N"/>
</dbReference>
<dbReference type="NCBIfam" id="TIGR00932">
    <property type="entry name" value="2a37"/>
    <property type="match status" value="1"/>
</dbReference>
<dbReference type="NCBIfam" id="NF002924">
    <property type="entry name" value="PRK03562.1"/>
    <property type="match status" value="1"/>
</dbReference>
<dbReference type="PANTHER" id="PTHR46157:SF3">
    <property type="entry name" value="GLUTATHIONE-REGULATED POTASSIUM-EFFLUX SYSTEM PROTEIN KEFC"/>
    <property type="match status" value="1"/>
</dbReference>
<dbReference type="PANTHER" id="PTHR46157">
    <property type="entry name" value="K(+) EFFLUX ANTIPORTER 3, CHLOROPLASTIC"/>
    <property type="match status" value="1"/>
</dbReference>
<dbReference type="Pfam" id="PF00999">
    <property type="entry name" value="Na_H_Exchanger"/>
    <property type="match status" value="1"/>
</dbReference>
<dbReference type="Pfam" id="PF02254">
    <property type="entry name" value="TrkA_N"/>
    <property type="match status" value="1"/>
</dbReference>
<dbReference type="PRINTS" id="PR00335">
    <property type="entry name" value="KUPTAKETRKA"/>
</dbReference>
<dbReference type="SUPFAM" id="SSF51735">
    <property type="entry name" value="NAD(P)-binding Rossmann-fold domains"/>
    <property type="match status" value="1"/>
</dbReference>
<dbReference type="PROSITE" id="PS51201">
    <property type="entry name" value="RCK_N"/>
    <property type="match status" value="1"/>
</dbReference>
<keyword id="KW-0050">Antiport</keyword>
<keyword id="KW-0997">Cell inner membrane</keyword>
<keyword id="KW-1003">Cell membrane</keyword>
<keyword id="KW-0406">Ion transport</keyword>
<keyword id="KW-0472">Membrane</keyword>
<keyword id="KW-0630">Potassium</keyword>
<keyword id="KW-0633">Potassium transport</keyword>
<keyword id="KW-0812">Transmembrane</keyword>
<keyword id="KW-1133">Transmembrane helix</keyword>
<keyword id="KW-0813">Transport</keyword>
<comment type="function">
    <text evidence="1">Pore-forming subunit of a potassium efflux system that confers protection against electrophiles. Catalyzes K(+)/H(+) antiport.</text>
</comment>
<comment type="subunit">
    <text evidence="1">Homodimer. Interacts with the regulatory subunit KefF.</text>
</comment>
<comment type="subcellular location">
    <subcellularLocation>
        <location evidence="1">Cell inner membrane</location>
        <topology evidence="1">Multi-pass membrane protein</topology>
    </subcellularLocation>
</comment>
<comment type="similarity">
    <text evidence="1">Belongs to the monovalent cation:proton antiporter 2 (CPA2) transporter (TC 2.A.37) family. KefC subfamily.</text>
</comment>
<name>KEFC_ECO81</name>